<evidence type="ECO:0000255" key="1">
    <source>
        <dbReference type="HAMAP-Rule" id="MF_00051"/>
    </source>
</evidence>
<reference key="1">
    <citation type="journal article" date="2010" name="Genome Biol.">
        <title>Structure and dynamics of the pan-genome of Streptococcus pneumoniae and closely related species.</title>
        <authorList>
            <person name="Donati C."/>
            <person name="Hiller N.L."/>
            <person name="Tettelin H."/>
            <person name="Muzzi A."/>
            <person name="Croucher N.J."/>
            <person name="Angiuoli S.V."/>
            <person name="Oggioni M."/>
            <person name="Dunning Hotopp J.C."/>
            <person name="Hu F.Z."/>
            <person name="Riley D.R."/>
            <person name="Covacci A."/>
            <person name="Mitchell T.J."/>
            <person name="Bentley S.D."/>
            <person name="Kilian M."/>
            <person name="Ehrlich G.D."/>
            <person name="Rappuoli R."/>
            <person name="Moxon E.R."/>
            <person name="Masignani V."/>
        </authorList>
    </citation>
    <scope>NUCLEOTIDE SEQUENCE [LARGE SCALE GENOMIC DNA]</scope>
    <source>
        <strain>70585</strain>
    </source>
</reference>
<protein>
    <recommendedName>
        <fullName evidence="1">Serine hydroxymethyltransferase</fullName>
        <shortName evidence="1">SHMT</shortName>
        <shortName evidence="1">Serine methylase</shortName>
        <ecNumber evidence="1">2.1.2.1</ecNumber>
    </recommendedName>
</protein>
<accession>C1C6Z9</accession>
<feature type="chain" id="PRO_1000117650" description="Serine hydroxymethyltransferase">
    <location>
        <begin position="1"/>
        <end position="418"/>
    </location>
</feature>
<feature type="binding site" evidence="1">
    <location>
        <position position="121"/>
    </location>
    <ligand>
        <name>(6S)-5,6,7,8-tetrahydrofolate</name>
        <dbReference type="ChEBI" id="CHEBI:57453"/>
    </ligand>
</feature>
<feature type="binding site" evidence="1">
    <location>
        <begin position="125"/>
        <end position="127"/>
    </location>
    <ligand>
        <name>(6S)-5,6,7,8-tetrahydrofolate</name>
        <dbReference type="ChEBI" id="CHEBI:57453"/>
    </ligand>
</feature>
<feature type="binding site" evidence="1">
    <location>
        <position position="246"/>
    </location>
    <ligand>
        <name>(6S)-5,6,7,8-tetrahydrofolate</name>
        <dbReference type="ChEBI" id="CHEBI:57453"/>
    </ligand>
</feature>
<feature type="binding site" evidence="1">
    <location>
        <begin position="355"/>
        <end position="357"/>
    </location>
    <ligand>
        <name>(6S)-5,6,7,8-tetrahydrofolate</name>
        <dbReference type="ChEBI" id="CHEBI:57453"/>
    </ligand>
</feature>
<feature type="site" description="Plays an important role in substrate specificity" evidence="1">
    <location>
        <position position="229"/>
    </location>
</feature>
<feature type="modified residue" description="N6-(pyridoxal phosphate)lysine" evidence="1">
    <location>
        <position position="230"/>
    </location>
</feature>
<name>GLYA_STRP7</name>
<proteinExistence type="inferred from homology"/>
<gene>
    <name evidence="1" type="primary">glyA</name>
    <name type="ordered locus">SP70585_1063</name>
</gene>
<dbReference type="EC" id="2.1.2.1" evidence="1"/>
<dbReference type="EMBL" id="CP000918">
    <property type="protein sequence ID" value="ACO16994.1"/>
    <property type="molecule type" value="Genomic_DNA"/>
</dbReference>
<dbReference type="RefSeq" id="WP_000575529.1">
    <property type="nucleotide sequence ID" value="NC_012468.1"/>
</dbReference>
<dbReference type="SMR" id="C1C6Z9"/>
<dbReference type="KEGG" id="snm:SP70585_1063"/>
<dbReference type="HOGENOM" id="CLU_022477_2_1_9"/>
<dbReference type="UniPathway" id="UPA00193"/>
<dbReference type="UniPathway" id="UPA00288">
    <property type="reaction ID" value="UER01023"/>
</dbReference>
<dbReference type="Proteomes" id="UP000002211">
    <property type="component" value="Chromosome"/>
</dbReference>
<dbReference type="GO" id="GO:0005829">
    <property type="term" value="C:cytosol"/>
    <property type="evidence" value="ECO:0007669"/>
    <property type="project" value="TreeGrafter"/>
</dbReference>
<dbReference type="GO" id="GO:0004372">
    <property type="term" value="F:glycine hydroxymethyltransferase activity"/>
    <property type="evidence" value="ECO:0007669"/>
    <property type="project" value="UniProtKB-UniRule"/>
</dbReference>
<dbReference type="GO" id="GO:0030170">
    <property type="term" value="F:pyridoxal phosphate binding"/>
    <property type="evidence" value="ECO:0007669"/>
    <property type="project" value="UniProtKB-UniRule"/>
</dbReference>
<dbReference type="GO" id="GO:0019264">
    <property type="term" value="P:glycine biosynthetic process from serine"/>
    <property type="evidence" value="ECO:0007669"/>
    <property type="project" value="UniProtKB-UniRule"/>
</dbReference>
<dbReference type="GO" id="GO:0035999">
    <property type="term" value="P:tetrahydrofolate interconversion"/>
    <property type="evidence" value="ECO:0007669"/>
    <property type="project" value="UniProtKB-UniRule"/>
</dbReference>
<dbReference type="CDD" id="cd00378">
    <property type="entry name" value="SHMT"/>
    <property type="match status" value="1"/>
</dbReference>
<dbReference type="FunFam" id="3.40.640.10:FF:000001">
    <property type="entry name" value="Serine hydroxymethyltransferase"/>
    <property type="match status" value="1"/>
</dbReference>
<dbReference type="FunFam" id="3.90.1150.10:FF:000072">
    <property type="entry name" value="Serine hydroxymethyltransferase"/>
    <property type="match status" value="1"/>
</dbReference>
<dbReference type="Gene3D" id="3.90.1150.10">
    <property type="entry name" value="Aspartate Aminotransferase, domain 1"/>
    <property type="match status" value="1"/>
</dbReference>
<dbReference type="Gene3D" id="3.40.640.10">
    <property type="entry name" value="Type I PLP-dependent aspartate aminotransferase-like (Major domain)"/>
    <property type="match status" value="1"/>
</dbReference>
<dbReference type="HAMAP" id="MF_00051">
    <property type="entry name" value="SHMT"/>
    <property type="match status" value="1"/>
</dbReference>
<dbReference type="InterPro" id="IPR015424">
    <property type="entry name" value="PyrdxlP-dep_Trfase"/>
</dbReference>
<dbReference type="InterPro" id="IPR015421">
    <property type="entry name" value="PyrdxlP-dep_Trfase_major"/>
</dbReference>
<dbReference type="InterPro" id="IPR015422">
    <property type="entry name" value="PyrdxlP-dep_Trfase_small"/>
</dbReference>
<dbReference type="InterPro" id="IPR001085">
    <property type="entry name" value="Ser_HO-MeTrfase"/>
</dbReference>
<dbReference type="InterPro" id="IPR049943">
    <property type="entry name" value="Ser_HO-MeTrfase-like"/>
</dbReference>
<dbReference type="InterPro" id="IPR019798">
    <property type="entry name" value="Ser_HO-MeTrfase_PLP_BS"/>
</dbReference>
<dbReference type="InterPro" id="IPR039429">
    <property type="entry name" value="SHMT-like_dom"/>
</dbReference>
<dbReference type="NCBIfam" id="NF000586">
    <property type="entry name" value="PRK00011.1"/>
    <property type="match status" value="1"/>
</dbReference>
<dbReference type="PANTHER" id="PTHR11680">
    <property type="entry name" value="SERINE HYDROXYMETHYLTRANSFERASE"/>
    <property type="match status" value="1"/>
</dbReference>
<dbReference type="PANTHER" id="PTHR11680:SF35">
    <property type="entry name" value="SERINE HYDROXYMETHYLTRANSFERASE 1"/>
    <property type="match status" value="1"/>
</dbReference>
<dbReference type="Pfam" id="PF00464">
    <property type="entry name" value="SHMT"/>
    <property type="match status" value="1"/>
</dbReference>
<dbReference type="PIRSF" id="PIRSF000412">
    <property type="entry name" value="SHMT"/>
    <property type="match status" value="1"/>
</dbReference>
<dbReference type="SUPFAM" id="SSF53383">
    <property type="entry name" value="PLP-dependent transferases"/>
    <property type="match status" value="1"/>
</dbReference>
<dbReference type="PROSITE" id="PS00096">
    <property type="entry name" value="SHMT"/>
    <property type="match status" value="1"/>
</dbReference>
<sequence>MIFDKDDFKAYDADLWNAIAKEEERQQNNIELIASENVVSKAVMAAQGSILTNKYAEGYPGRRYYGGTDVVDVVETLAIERAKEIFGAKFANVQPHSGSQANCAAYMSLIEPGDTVMGMDLASGGHLTHGAPVSFSGQTYNFVSYSVDPKTELLDFDAILKQAQEVKPKLIVAGASAYSQIIDFSKFREIADAVGAKLMVDMAHIAGLVAAGLHPSPVPYAHITTTTTHKTLRGPRGGLILTNDEELAKKINSAIFPGIQGGPLEHVVAAKAVSFKEVLDPAFKEYAANVIKNSKAMADVFLQDPDFRIISGGTENHLFLVDVTKVVENGKVAQNLLDEVNITLNKNSIPYETLSPFKTSGIRIGAAAITAREFGEEESRKVAELIIKTLKNSENEAVLEEVRSAVKELTDAFPLYEE</sequence>
<comment type="function">
    <text evidence="1">Catalyzes the reversible interconversion of serine and glycine with tetrahydrofolate (THF) serving as the one-carbon carrier. This reaction serves as the major source of one-carbon groups required for the biosynthesis of purines, thymidylate, methionine, and other important biomolecules. Also exhibits THF-independent aldolase activity toward beta-hydroxyamino acids, producing glycine and aldehydes, via a retro-aldol mechanism.</text>
</comment>
<comment type="catalytic activity">
    <reaction evidence="1">
        <text>(6R)-5,10-methylene-5,6,7,8-tetrahydrofolate + glycine + H2O = (6S)-5,6,7,8-tetrahydrofolate + L-serine</text>
        <dbReference type="Rhea" id="RHEA:15481"/>
        <dbReference type="ChEBI" id="CHEBI:15377"/>
        <dbReference type="ChEBI" id="CHEBI:15636"/>
        <dbReference type="ChEBI" id="CHEBI:33384"/>
        <dbReference type="ChEBI" id="CHEBI:57305"/>
        <dbReference type="ChEBI" id="CHEBI:57453"/>
        <dbReference type="EC" id="2.1.2.1"/>
    </reaction>
</comment>
<comment type="cofactor">
    <cofactor evidence="1">
        <name>pyridoxal 5'-phosphate</name>
        <dbReference type="ChEBI" id="CHEBI:597326"/>
    </cofactor>
</comment>
<comment type="pathway">
    <text evidence="1">One-carbon metabolism; tetrahydrofolate interconversion.</text>
</comment>
<comment type="pathway">
    <text evidence="1">Amino-acid biosynthesis; glycine biosynthesis; glycine from L-serine: step 1/1.</text>
</comment>
<comment type="subunit">
    <text evidence="1">Homodimer.</text>
</comment>
<comment type="subcellular location">
    <subcellularLocation>
        <location evidence="1">Cytoplasm</location>
    </subcellularLocation>
</comment>
<comment type="similarity">
    <text evidence="1">Belongs to the SHMT family.</text>
</comment>
<keyword id="KW-0028">Amino-acid biosynthesis</keyword>
<keyword id="KW-0963">Cytoplasm</keyword>
<keyword id="KW-0554">One-carbon metabolism</keyword>
<keyword id="KW-0663">Pyridoxal phosphate</keyword>
<keyword id="KW-0808">Transferase</keyword>
<organism>
    <name type="scientific">Streptococcus pneumoniae (strain 70585)</name>
    <dbReference type="NCBI Taxonomy" id="488221"/>
    <lineage>
        <taxon>Bacteria</taxon>
        <taxon>Bacillati</taxon>
        <taxon>Bacillota</taxon>
        <taxon>Bacilli</taxon>
        <taxon>Lactobacillales</taxon>
        <taxon>Streptococcaceae</taxon>
        <taxon>Streptococcus</taxon>
    </lineage>
</organism>